<reference evidence="7" key="1">
    <citation type="submission" date="2004-08" db="EMBL/GenBank/DDBJ databases">
        <authorList>
            <consortium name="NIH - Xenopus Gene Collection (XGC) project"/>
        </authorList>
    </citation>
    <scope>NUCLEOTIDE SEQUENCE [LARGE SCALE MRNA]</scope>
    <source>
        <tissue evidence="7">Eye</tissue>
    </source>
</reference>
<dbReference type="EMBL" id="BC080056">
    <property type="protein sequence ID" value="AAH80056.1"/>
    <property type="molecule type" value="mRNA"/>
</dbReference>
<dbReference type="SMR" id="Q68EZ2"/>
<dbReference type="DNASU" id="447345"/>
<dbReference type="KEGG" id="xla:447345"/>
<dbReference type="AGR" id="Xenbase:XB-GENE-865002"/>
<dbReference type="CTD" id="447345"/>
<dbReference type="Xenbase" id="XB-GENE-865002">
    <property type="gene designation" value="foxj2.S"/>
</dbReference>
<dbReference type="OrthoDB" id="10029558at2759"/>
<dbReference type="Proteomes" id="UP000186698">
    <property type="component" value="Chromosome 7S"/>
</dbReference>
<dbReference type="Bgee" id="447345">
    <property type="expression patterns" value="Expressed in muscle tissue and 18 other cell types or tissues"/>
</dbReference>
<dbReference type="GO" id="GO:0005634">
    <property type="term" value="C:nucleus"/>
    <property type="evidence" value="ECO:0000318"/>
    <property type="project" value="GO_Central"/>
</dbReference>
<dbReference type="GO" id="GO:0000981">
    <property type="term" value="F:DNA-binding transcription factor activity, RNA polymerase II-specific"/>
    <property type="evidence" value="ECO:0000318"/>
    <property type="project" value="GO_Central"/>
</dbReference>
<dbReference type="GO" id="GO:0000978">
    <property type="term" value="F:RNA polymerase II cis-regulatory region sequence-specific DNA binding"/>
    <property type="evidence" value="ECO:0000318"/>
    <property type="project" value="GO_Central"/>
</dbReference>
<dbReference type="GO" id="GO:0043565">
    <property type="term" value="F:sequence-specific DNA binding"/>
    <property type="evidence" value="ECO:0000250"/>
    <property type="project" value="UniProtKB"/>
</dbReference>
<dbReference type="GO" id="GO:0045893">
    <property type="term" value="P:positive regulation of DNA-templated transcription"/>
    <property type="evidence" value="ECO:0000250"/>
    <property type="project" value="UniProtKB"/>
</dbReference>
<dbReference type="GO" id="GO:0006357">
    <property type="term" value="P:regulation of transcription by RNA polymerase II"/>
    <property type="evidence" value="ECO:0000318"/>
    <property type="project" value="GO_Central"/>
</dbReference>
<dbReference type="CDD" id="cd20051">
    <property type="entry name" value="FH_FOXJ2"/>
    <property type="match status" value="1"/>
</dbReference>
<dbReference type="FunFam" id="1.10.10.10:FF:000088">
    <property type="entry name" value="Forkhead box protein J3"/>
    <property type="match status" value="1"/>
</dbReference>
<dbReference type="Gene3D" id="1.10.10.10">
    <property type="entry name" value="Winged helix-like DNA-binding domain superfamily/Winged helix DNA-binding domain"/>
    <property type="match status" value="1"/>
</dbReference>
<dbReference type="InterPro" id="IPR047393">
    <property type="entry name" value="FH_FOXJ2"/>
</dbReference>
<dbReference type="InterPro" id="IPR001766">
    <property type="entry name" value="Fork_head_dom"/>
</dbReference>
<dbReference type="InterPro" id="IPR045912">
    <property type="entry name" value="FOXJ2/3-like"/>
</dbReference>
<dbReference type="InterPro" id="IPR018122">
    <property type="entry name" value="TF_fork_head_CS_1"/>
</dbReference>
<dbReference type="InterPro" id="IPR030456">
    <property type="entry name" value="TF_fork_head_CS_2"/>
</dbReference>
<dbReference type="InterPro" id="IPR036388">
    <property type="entry name" value="WH-like_DNA-bd_sf"/>
</dbReference>
<dbReference type="InterPro" id="IPR036390">
    <property type="entry name" value="WH_DNA-bd_sf"/>
</dbReference>
<dbReference type="PANTHER" id="PTHR46078:SF1">
    <property type="entry name" value="FORKHEAD BOX PROTEIN J2"/>
    <property type="match status" value="1"/>
</dbReference>
<dbReference type="PANTHER" id="PTHR46078">
    <property type="entry name" value="FORKHEAD BOX PROTEIN J2 FAMILY MEMBER"/>
    <property type="match status" value="1"/>
</dbReference>
<dbReference type="Pfam" id="PF00250">
    <property type="entry name" value="Forkhead"/>
    <property type="match status" value="1"/>
</dbReference>
<dbReference type="PRINTS" id="PR00053">
    <property type="entry name" value="FORKHEAD"/>
</dbReference>
<dbReference type="SMART" id="SM00339">
    <property type="entry name" value="FH"/>
    <property type="match status" value="1"/>
</dbReference>
<dbReference type="SUPFAM" id="SSF46785">
    <property type="entry name" value="Winged helix' DNA-binding domain"/>
    <property type="match status" value="1"/>
</dbReference>
<dbReference type="PROSITE" id="PS00657">
    <property type="entry name" value="FORK_HEAD_1"/>
    <property type="match status" value="1"/>
</dbReference>
<dbReference type="PROSITE" id="PS00658">
    <property type="entry name" value="FORK_HEAD_2"/>
    <property type="match status" value="1"/>
</dbReference>
<dbReference type="PROSITE" id="PS50039">
    <property type="entry name" value="FORK_HEAD_3"/>
    <property type="match status" value="1"/>
</dbReference>
<accession>Q68EZ2</accession>
<keyword id="KW-0010">Activator</keyword>
<keyword id="KW-0238">DNA-binding</keyword>
<keyword id="KW-0539">Nucleus</keyword>
<keyword id="KW-1185">Reference proteome</keyword>
<keyword id="KW-0804">Transcription</keyword>
<keyword id="KW-0805">Transcription regulation</keyword>
<organism>
    <name type="scientific">Xenopus laevis</name>
    <name type="common">African clawed frog</name>
    <dbReference type="NCBI Taxonomy" id="8355"/>
    <lineage>
        <taxon>Eukaryota</taxon>
        <taxon>Metazoa</taxon>
        <taxon>Chordata</taxon>
        <taxon>Craniata</taxon>
        <taxon>Vertebrata</taxon>
        <taxon>Euteleostomi</taxon>
        <taxon>Amphibia</taxon>
        <taxon>Batrachia</taxon>
        <taxon>Anura</taxon>
        <taxon>Pipoidea</taxon>
        <taxon>Pipidae</taxon>
        <taxon>Xenopodinae</taxon>
        <taxon>Xenopus</taxon>
        <taxon>Xenopus</taxon>
    </lineage>
</organism>
<protein>
    <recommendedName>
        <fullName>Forkhead box protein J2</fullName>
        <shortName>FoxJ2</shortName>
    </recommendedName>
</protein>
<proteinExistence type="evidence at transcript level"/>
<name>FOXJ2_XENLA</name>
<evidence type="ECO:0000250" key="1">
    <source>
        <dbReference type="UniProtKB" id="Q28EM1"/>
    </source>
</evidence>
<evidence type="ECO:0000250" key="2">
    <source>
        <dbReference type="UniProtKB" id="Q9P0K8"/>
    </source>
</evidence>
<evidence type="ECO:0000255" key="3"/>
<evidence type="ECO:0000255" key="4">
    <source>
        <dbReference type="PROSITE-ProRule" id="PRU00089"/>
    </source>
</evidence>
<evidence type="ECO:0000256" key="5">
    <source>
        <dbReference type="SAM" id="MobiDB-lite"/>
    </source>
</evidence>
<evidence type="ECO:0000305" key="6"/>
<evidence type="ECO:0000312" key="7">
    <source>
        <dbReference type="EMBL" id="AAH80056.1"/>
    </source>
</evidence>
<feature type="chain" id="PRO_0000258006" description="Forkhead box protein J2">
    <location>
        <begin position="1"/>
        <end position="512"/>
    </location>
</feature>
<feature type="DNA-binding region" description="Fork-head" evidence="4">
    <location>
        <begin position="59"/>
        <end position="150"/>
    </location>
</feature>
<feature type="region of interest" description="Disordered" evidence="5">
    <location>
        <begin position="25"/>
        <end position="58"/>
    </location>
</feature>
<feature type="region of interest" description="Disordered" evidence="5">
    <location>
        <begin position="143"/>
        <end position="213"/>
    </location>
</feature>
<feature type="region of interest" description="Disordered" evidence="5">
    <location>
        <begin position="284"/>
        <end position="326"/>
    </location>
</feature>
<feature type="region of interest" description="Disordered" evidence="5">
    <location>
        <begin position="448"/>
        <end position="512"/>
    </location>
</feature>
<feature type="compositionally biased region" description="Basic and acidic residues" evidence="5">
    <location>
        <begin position="48"/>
        <end position="58"/>
    </location>
</feature>
<feature type="compositionally biased region" description="Polar residues" evidence="5">
    <location>
        <begin position="167"/>
        <end position="204"/>
    </location>
</feature>
<feature type="compositionally biased region" description="Low complexity" evidence="5">
    <location>
        <begin position="304"/>
        <end position="323"/>
    </location>
</feature>
<feature type="compositionally biased region" description="Polar residues" evidence="5">
    <location>
        <begin position="456"/>
        <end position="478"/>
    </location>
</feature>
<feature type="compositionally biased region" description="Acidic residues" evidence="5">
    <location>
        <begin position="501"/>
        <end position="512"/>
    </location>
</feature>
<sequence length="512" mass="56523">MASDLGSSLTSIDWLPQLTIQASIKGSQQNSVGRKGPGSPADPSAMLSKEEAAAHRDGKPPYSYANLIQYAINSAPAKRMTLSEIYRWICDNFPYYRSAGVGWKNSIRHNLSLNKCFRKVPRPRDDPGKGSYWMIDSCPKEDITLPRRKRPHPDDEVSQDSFEQEVNKSPLSSASEVSMPQEATQGHPMNNNSPLPTYSQANPTQMPPDSRAPTYNNNDCYKFSFSESTFPDLSCSFRSLYHSLLGKQGERGDKDLYNSMQSKQVLPPVHSEVQSSSCCMYQQNSGAAPSNLHPHNVPSISGLPPSHHQAQHQQPPYLPQQQMPRPPAPGMSLGLPSDWCSNIDSLKESFKIVSSLDWSSVDLSQFSDLMESLRQAELKNWSLDQDHIASLCDSLSHLLSTTGLLPQNHGQPPSCQAPCMPPTTSSACALRGGKPGHNMAVNSYGQNQPPPVSCGHTFTVSSGYPTQSQAPPTYSQQGRHPHRALYPPQRPTLRYPQSSDDIQDDFDWDSIA</sequence>
<gene>
    <name evidence="1" type="primary">foxj2</name>
</gene>
<comment type="function">
    <text evidence="2">Transcriptional activator.</text>
</comment>
<comment type="subcellular location">
    <subcellularLocation>
        <location evidence="3 6">Nucleus</location>
    </subcellularLocation>
</comment>